<gene>
    <name evidence="17" type="primary">CEP135</name>
    <name type="synonym">CEP4</name>
    <name type="synonym">KIAA0635</name>
</gene>
<accession>Q66GS9</accession>
<accession>B2RMY0</accession>
<accession>O75130</accession>
<accession>Q58F25</accession>
<accession>Q9H8H7</accession>
<reference key="1">
    <citation type="journal article" date="2004" name="Nat. Genet.">
        <title>Complete sequencing and characterization of 21,243 full-length human cDNAs.</title>
        <authorList>
            <person name="Ota T."/>
            <person name="Suzuki Y."/>
            <person name="Nishikawa T."/>
            <person name="Otsuki T."/>
            <person name="Sugiyama T."/>
            <person name="Irie R."/>
            <person name="Wakamatsu A."/>
            <person name="Hayashi K."/>
            <person name="Sato H."/>
            <person name="Nagai K."/>
            <person name="Kimura K."/>
            <person name="Makita H."/>
            <person name="Sekine M."/>
            <person name="Obayashi M."/>
            <person name="Nishi T."/>
            <person name="Shibahara T."/>
            <person name="Tanaka T."/>
            <person name="Ishii S."/>
            <person name="Yamamoto J."/>
            <person name="Saito K."/>
            <person name="Kawai Y."/>
            <person name="Isono Y."/>
            <person name="Nakamura Y."/>
            <person name="Nagahari K."/>
            <person name="Murakami K."/>
            <person name="Yasuda T."/>
            <person name="Iwayanagi T."/>
            <person name="Wagatsuma M."/>
            <person name="Shiratori A."/>
            <person name="Sudo H."/>
            <person name="Hosoiri T."/>
            <person name="Kaku Y."/>
            <person name="Kodaira H."/>
            <person name="Kondo H."/>
            <person name="Sugawara M."/>
            <person name="Takahashi M."/>
            <person name="Kanda K."/>
            <person name="Yokoi T."/>
            <person name="Furuya T."/>
            <person name="Kikkawa E."/>
            <person name="Omura Y."/>
            <person name="Abe K."/>
            <person name="Kamihara K."/>
            <person name="Katsuta N."/>
            <person name="Sato K."/>
            <person name="Tanikawa M."/>
            <person name="Yamazaki M."/>
            <person name="Ninomiya K."/>
            <person name="Ishibashi T."/>
            <person name="Yamashita H."/>
            <person name="Murakawa K."/>
            <person name="Fujimori K."/>
            <person name="Tanai H."/>
            <person name="Kimata M."/>
            <person name="Watanabe M."/>
            <person name="Hiraoka S."/>
            <person name="Chiba Y."/>
            <person name="Ishida S."/>
            <person name="Ono Y."/>
            <person name="Takiguchi S."/>
            <person name="Watanabe S."/>
            <person name="Yosida M."/>
            <person name="Hotuta T."/>
            <person name="Kusano J."/>
            <person name="Kanehori K."/>
            <person name="Takahashi-Fujii A."/>
            <person name="Hara H."/>
            <person name="Tanase T.-O."/>
            <person name="Nomura Y."/>
            <person name="Togiya S."/>
            <person name="Komai F."/>
            <person name="Hara R."/>
            <person name="Takeuchi K."/>
            <person name="Arita M."/>
            <person name="Imose N."/>
            <person name="Musashino K."/>
            <person name="Yuuki H."/>
            <person name="Oshima A."/>
            <person name="Sasaki N."/>
            <person name="Aotsuka S."/>
            <person name="Yoshikawa Y."/>
            <person name="Matsunawa H."/>
            <person name="Ichihara T."/>
            <person name="Shiohata N."/>
            <person name="Sano S."/>
            <person name="Moriya S."/>
            <person name="Momiyama H."/>
            <person name="Satoh N."/>
            <person name="Takami S."/>
            <person name="Terashima Y."/>
            <person name="Suzuki O."/>
            <person name="Nakagawa S."/>
            <person name="Senoh A."/>
            <person name="Mizoguchi H."/>
            <person name="Goto Y."/>
            <person name="Shimizu F."/>
            <person name="Wakebe H."/>
            <person name="Hishigaki H."/>
            <person name="Watanabe T."/>
            <person name="Sugiyama A."/>
            <person name="Takemoto M."/>
            <person name="Kawakami B."/>
            <person name="Yamazaki M."/>
            <person name="Watanabe K."/>
            <person name="Kumagai A."/>
            <person name="Itakura S."/>
            <person name="Fukuzumi Y."/>
            <person name="Fujimori Y."/>
            <person name="Komiyama M."/>
            <person name="Tashiro H."/>
            <person name="Tanigami A."/>
            <person name="Fujiwara T."/>
            <person name="Ono T."/>
            <person name="Yamada K."/>
            <person name="Fujii Y."/>
            <person name="Ozaki K."/>
            <person name="Hirao M."/>
            <person name="Ohmori Y."/>
            <person name="Kawabata A."/>
            <person name="Hikiji T."/>
            <person name="Kobatake N."/>
            <person name="Inagaki H."/>
            <person name="Ikema Y."/>
            <person name="Okamoto S."/>
            <person name="Okitani R."/>
            <person name="Kawakami T."/>
            <person name="Noguchi S."/>
            <person name="Itoh T."/>
            <person name="Shigeta K."/>
            <person name="Senba T."/>
            <person name="Matsumura K."/>
            <person name="Nakajima Y."/>
            <person name="Mizuno T."/>
            <person name="Morinaga M."/>
            <person name="Sasaki M."/>
            <person name="Togashi T."/>
            <person name="Oyama M."/>
            <person name="Hata H."/>
            <person name="Watanabe M."/>
            <person name="Komatsu T."/>
            <person name="Mizushima-Sugano J."/>
            <person name="Satoh T."/>
            <person name="Shirai Y."/>
            <person name="Takahashi Y."/>
            <person name="Nakagawa K."/>
            <person name="Okumura K."/>
            <person name="Nagase T."/>
            <person name="Nomura N."/>
            <person name="Kikuchi H."/>
            <person name="Masuho Y."/>
            <person name="Yamashita R."/>
            <person name="Nakai K."/>
            <person name="Yada T."/>
            <person name="Nakamura Y."/>
            <person name="Ohara O."/>
            <person name="Isogai T."/>
            <person name="Sugano S."/>
        </authorList>
    </citation>
    <scope>NUCLEOTIDE SEQUENCE [LARGE SCALE MRNA] (ISOFORM 2)</scope>
    <source>
        <tissue>Placenta</tissue>
    </source>
</reference>
<reference key="2">
    <citation type="journal article" date="2005" name="Nature">
        <title>Generation and annotation of the DNA sequences of human chromosomes 2 and 4.</title>
        <authorList>
            <person name="Hillier L.W."/>
            <person name="Graves T.A."/>
            <person name="Fulton R.S."/>
            <person name="Fulton L.A."/>
            <person name="Pepin K.H."/>
            <person name="Minx P."/>
            <person name="Wagner-McPherson C."/>
            <person name="Layman D."/>
            <person name="Wylie K."/>
            <person name="Sekhon M."/>
            <person name="Becker M.C."/>
            <person name="Fewell G.A."/>
            <person name="Delehaunty K.D."/>
            <person name="Miner T.L."/>
            <person name="Nash W.E."/>
            <person name="Kremitzki C."/>
            <person name="Oddy L."/>
            <person name="Du H."/>
            <person name="Sun H."/>
            <person name="Bradshaw-Cordum H."/>
            <person name="Ali J."/>
            <person name="Carter J."/>
            <person name="Cordes M."/>
            <person name="Harris A."/>
            <person name="Isak A."/>
            <person name="van Brunt A."/>
            <person name="Nguyen C."/>
            <person name="Du F."/>
            <person name="Courtney L."/>
            <person name="Kalicki J."/>
            <person name="Ozersky P."/>
            <person name="Abbott S."/>
            <person name="Armstrong J."/>
            <person name="Belter E.A."/>
            <person name="Caruso L."/>
            <person name="Cedroni M."/>
            <person name="Cotton M."/>
            <person name="Davidson T."/>
            <person name="Desai A."/>
            <person name="Elliott G."/>
            <person name="Erb T."/>
            <person name="Fronick C."/>
            <person name="Gaige T."/>
            <person name="Haakenson W."/>
            <person name="Haglund K."/>
            <person name="Holmes A."/>
            <person name="Harkins R."/>
            <person name="Kim K."/>
            <person name="Kruchowski S.S."/>
            <person name="Strong C.M."/>
            <person name="Grewal N."/>
            <person name="Goyea E."/>
            <person name="Hou S."/>
            <person name="Levy A."/>
            <person name="Martinka S."/>
            <person name="Mead K."/>
            <person name="McLellan M.D."/>
            <person name="Meyer R."/>
            <person name="Randall-Maher J."/>
            <person name="Tomlinson C."/>
            <person name="Dauphin-Kohlberg S."/>
            <person name="Kozlowicz-Reilly A."/>
            <person name="Shah N."/>
            <person name="Swearengen-Shahid S."/>
            <person name="Snider J."/>
            <person name="Strong J.T."/>
            <person name="Thompson J."/>
            <person name="Yoakum M."/>
            <person name="Leonard S."/>
            <person name="Pearman C."/>
            <person name="Trani L."/>
            <person name="Radionenko M."/>
            <person name="Waligorski J.E."/>
            <person name="Wang C."/>
            <person name="Rock S.M."/>
            <person name="Tin-Wollam A.-M."/>
            <person name="Maupin R."/>
            <person name="Latreille P."/>
            <person name="Wendl M.C."/>
            <person name="Yang S.-P."/>
            <person name="Pohl C."/>
            <person name="Wallis J.W."/>
            <person name="Spieth J."/>
            <person name="Bieri T.A."/>
            <person name="Berkowicz N."/>
            <person name="Nelson J.O."/>
            <person name="Osborne J."/>
            <person name="Ding L."/>
            <person name="Meyer R."/>
            <person name="Sabo A."/>
            <person name="Shotland Y."/>
            <person name="Sinha P."/>
            <person name="Wohldmann P.E."/>
            <person name="Cook L.L."/>
            <person name="Hickenbotham M.T."/>
            <person name="Eldred J."/>
            <person name="Williams D."/>
            <person name="Jones T.A."/>
            <person name="She X."/>
            <person name="Ciccarelli F.D."/>
            <person name="Izaurralde E."/>
            <person name="Taylor J."/>
            <person name="Schmutz J."/>
            <person name="Myers R.M."/>
            <person name="Cox D.R."/>
            <person name="Huang X."/>
            <person name="McPherson J.D."/>
            <person name="Mardis E.R."/>
            <person name="Clifton S.W."/>
            <person name="Warren W.C."/>
            <person name="Chinwalla A.T."/>
            <person name="Eddy S.R."/>
            <person name="Marra M.A."/>
            <person name="Ovcharenko I."/>
            <person name="Furey T.S."/>
            <person name="Miller W."/>
            <person name="Eichler E.E."/>
            <person name="Bork P."/>
            <person name="Suyama M."/>
            <person name="Torrents D."/>
            <person name="Waterston R.H."/>
            <person name="Wilson R.K."/>
        </authorList>
    </citation>
    <scope>NUCLEOTIDE SEQUENCE [LARGE SCALE GENOMIC DNA]</scope>
</reference>
<reference key="3">
    <citation type="journal article" date="2004" name="Genome Res.">
        <title>The status, quality, and expansion of the NIH full-length cDNA project: the Mammalian Gene Collection (MGC).</title>
        <authorList>
            <consortium name="The MGC Project Team"/>
        </authorList>
    </citation>
    <scope>NUCLEOTIDE SEQUENCE [LARGE SCALE MRNA] (ISOFORM 1)</scope>
    <source>
        <tissue>Testis</tissue>
    </source>
</reference>
<reference key="4">
    <citation type="journal article" date="1998" name="DNA Res.">
        <title>Prediction of the coding sequences of unidentified human genes. X. The complete sequences of 100 new cDNA clones from brain which can code for large proteins in vitro.</title>
        <authorList>
            <person name="Ishikawa K."/>
            <person name="Nagase T."/>
            <person name="Suyama M."/>
            <person name="Miyajima N."/>
            <person name="Tanaka A."/>
            <person name="Kotani H."/>
            <person name="Nomura N."/>
            <person name="Ohara O."/>
        </authorList>
    </citation>
    <scope>NUCLEOTIDE SEQUENCE [LARGE SCALE MRNA] OF 277-1140 (ISOFORM 1)</scope>
    <source>
        <tissue>Brain</tissue>
    </source>
</reference>
<reference key="5">
    <citation type="journal article" date="2003" name="Nature">
        <title>Proteomic characterization of the human centrosome by protein correlation profiling.</title>
        <authorList>
            <person name="Andersen J.S."/>
            <person name="Wilkinson C.J."/>
            <person name="Mayor T."/>
            <person name="Mortensen P."/>
            <person name="Nigg E.A."/>
            <person name="Mann M."/>
        </authorList>
    </citation>
    <scope>IDENTIFICATION BY MASS SPECTROMETRY</scope>
    <scope>SUBCELLULAR LOCATION [LARGE SCALE ANALYSIS]</scope>
    <source>
        <tissue>Lymphoblast</tissue>
    </source>
</reference>
<reference key="6">
    <citation type="journal article" date="2007" name="Dev. Cell">
        <title>Plk4-induced centriole biogenesis in human cells.</title>
        <authorList>
            <person name="Kleylein-Sohn J."/>
            <person name="Westendorf J."/>
            <person name="Le Clech M."/>
            <person name="Habedanck R."/>
            <person name="Stierhof Y.-D."/>
            <person name="Nigg E.A."/>
        </authorList>
    </citation>
    <scope>FUNCTION</scope>
    <scope>SUBCELLULAR LOCATION</scope>
</reference>
<reference key="7">
    <citation type="journal article" date="2008" name="Exp. Cell Res.">
        <title>A novel function of CEP135 as a platform protein of C-NAP1 for its centriolar localization.</title>
        <authorList>
            <person name="Kim K."/>
            <person name="Lee S."/>
            <person name="Chang J."/>
            <person name="Rhee K."/>
        </authorList>
    </citation>
    <scope>FUNCTION</scope>
    <scope>INTERACTION WITH CEP250</scope>
</reference>
<reference key="8">
    <citation type="journal article" date="2012" name="Am. J. Hum. Genet.">
        <title>A truncating mutation of CEP135 causes primary microcephaly and disturbed centrosomal function.</title>
        <authorList>
            <person name="Hussain M.S."/>
            <person name="Baig S.M."/>
            <person name="Neumann S."/>
            <person name="Nurnberg G."/>
            <person name="Farooq M."/>
            <person name="Ahmad I."/>
            <person name="Alef T."/>
            <person name="Hennies H.C."/>
            <person name="Technau M."/>
            <person name="Altmuller J."/>
            <person name="Frommolt P."/>
            <person name="Thiele H."/>
            <person name="Noegel A.A."/>
            <person name="Nurnberg P."/>
        </authorList>
    </citation>
    <scope>INVOLVEMENT IN MCPH8</scope>
</reference>
<reference key="9">
    <citation type="journal article" date="2013" name="J. Proteome Res.">
        <title>Toward a comprehensive characterization of a human cancer cell phosphoproteome.</title>
        <authorList>
            <person name="Zhou H."/>
            <person name="Di Palma S."/>
            <person name="Preisinger C."/>
            <person name="Peng M."/>
            <person name="Polat A.N."/>
            <person name="Heck A.J."/>
            <person name="Mohammed S."/>
        </authorList>
    </citation>
    <scope>PHOSPHORYLATION [LARGE SCALE ANALYSIS] AT SER-383; SER-439; SER-688 AND THR-1121</scope>
    <scope>IDENTIFICATION BY MASS SPECTROMETRY [LARGE SCALE ANALYSIS]</scope>
    <source>
        <tissue>Cervix carcinoma</tissue>
        <tissue>Erythroleukemia</tissue>
    </source>
</reference>
<reference key="10">
    <citation type="journal article" date="2016" name="J. Cell Sci.">
        <title>WDR8 is a centriolar satellite and centriole-associated protein that promotes ciliary vesicle docking during ciliogenesis.</title>
        <authorList>
            <person name="Kurtulmus B."/>
            <person name="Wang W."/>
            <person name="Ruppert T."/>
            <person name="Neuner A."/>
            <person name="Cerikan B."/>
            <person name="Viol L."/>
            <person name="Duenas-Sanchez R."/>
            <person name="Gruss O.J."/>
            <person name="Pereira G."/>
        </authorList>
    </citation>
    <scope>FUNCTION</scope>
</reference>
<reference key="11">
    <citation type="journal article" date="2016" name="J. Cell Sci.">
        <title>CEP295 interacts with microtubules and is required for centriole elongation.</title>
        <authorList>
            <person name="Chang C.W."/>
            <person name="Hsu W.B."/>
            <person name="Tsai J.J."/>
            <person name="Tang C.J."/>
            <person name="Tang T.K."/>
        </authorList>
    </citation>
    <scope>FUNCTION</scope>
</reference>
<reference key="12">
    <citation type="journal article" date="2020" name="Elife">
        <title>WDR90 is a centriolar microtubule wall protein important for centriole architecture integrity.</title>
        <authorList>
            <person name="Steib E."/>
            <person name="Laporte M.H."/>
            <person name="Gambarotto D."/>
            <person name="Olieric N."/>
            <person name="Zheng C."/>
            <person name="Borgers S."/>
            <person name="Olieric V."/>
            <person name="Le Guennec M."/>
            <person name="Koll F."/>
            <person name="Tassin A.M."/>
            <person name="Steinmetz M.O."/>
            <person name="Guichard P."/>
            <person name="Hamel V."/>
        </authorList>
    </citation>
    <scope>SUBCELLULAR LOCATION</scope>
</reference>
<reference key="13">
    <citation type="journal article" date="2020" name="Nat. Commun.">
        <title>CEP44 ensures the formation of bona fide centriole wall, a requirement for the centriole-to-centrosome conversion.</title>
        <authorList>
            <person name="Atorino E.S."/>
            <person name="Hata S."/>
            <person name="Funaya C."/>
            <person name="Neuner A."/>
            <person name="Schiebel E."/>
        </authorList>
    </citation>
    <scope>SUBCELLULAR LOCATION</scope>
</reference>
<reference key="14">
    <citation type="journal article" date="2016" name="Structure">
        <title>The Human centriolar protein CEP135 contains a two-stranded coiled-coil domain critical for microtubule binding.</title>
        <authorList>
            <person name="Kraatz S."/>
            <person name="Guichard P."/>
            <person name="Obbineni J.M."/>
            <person name="Olieric N."/>
            <person name="Hatzopoulos G.N."/>
            <person name="Hilbert M."/>
            <person name="Sen I."/>
            <person name="Missimer J."/>
            <person name="Gonczy P."/>
            <person name="Steinmetz M.O."/>
        </authorList>
    </citation>
    <scope>X-RAY CRYSTALLOGRAPHY (1.80 ANGSTROMS) OF 82-144 IN HOMODIMER</scope>
    <scope>DISULFIDE BONDS</scope>
    <scope>FUNCTION</scope>
    <scope>MUTAGENESIS OF LYS-101; LYS-104 AND LYS-108</scope>
    <scope>DOMAIN</scope>
    <scope>MICROTUBULE-BINDING</scope>
</reference>
<reference evidence="19" key="15">
    <citation type="journal article" date="2018" name="Biosci. Rep.">
        <title>Combinatorial use of disulfide bridges and native sulfur-SAD phasing for rapid structure determination of coiled-coils.</title>
        <authorList>
            <person name="Kraatz S.H.W."/>
            <person name="Bianchi S."/>
            <person name="Steinmetz M.O."/>
        </authorList>
    </citation>
    <scope>X-RAY CRYSTALLOGRAPHY (2.14 ANGSTROMS) OF 82-144</scope>
    <scope>DISULFIDE BOND</scope>
</reference>
<name>CP135_HUMAN</name>
<feature type="chain" id="PRO_0000089491" description="Centrosomal protein of 135 kDa">
    <location>
        <begin position="1"/>
        <end position="1140"/>
    </location>
</feature>
<feature type="region of interest" description="Homodimerization" evidence="16 18">
    <location>
        <begin position="11"/>
        <end position="64"/>
    </location>
</feature>
<feature type="region of interest" description="Disordered" evidence="3">
    <location>
        <begin position="1114"/>
        <end position="1140"/>
    </location>
</feature>
<feature type="coiled-coil region" evidence="2">
    <location>
        <begin position="75"/>
        <end position="151"/>
    </location>
</feature>
<feature type="coiled-coil region" evidence="2">
    <location>
        <begin position="199"/>
        <end position="416"/>
    </location>
</feature>
<feature type="coiled-coil region" evidence="2">
    <location>
        <begin position="447"/>
        <end position="644"/>
    </location>
</feature>
<feature type="coiled-coil region" evidence="2">
    <location>
        <begin position="668"/>
        <end position="1036"/>
    </location>
</feature>
<feature type="coiled-coil region" evidence="2">
    <location>
        <begin position="1079"/>
        <end position="1113"/>
    </location>
</feature>
<feature type="compositionally biased region" description="Low complexity" evidence="3">
    <location>
        <begin position="1121"/>
        <end position="1133"/>
    </location>
</feature>
<feature type="site" description="Microtubule binding" evidence="10">
    <location>
        <position position="101"/>
    </location>
</feature>
<feature type="site" description="Microtubule binding" evidence="10">
    <location>
        <position position="104"/>
    </location>
</feature>
<feature type="site" description="Microtubule binding" evidence="10">
    <location>
        <position position="108"/>
    </location>
</feature>
<feature type="modified residue" description="Phosphoserine" evidence="20">
    <location>
        <position position="383"/>
    </location>
</feature>
<feature type="modified residue" description="Phosphoserine" evidence="20">
    <location>
        <position position="439"/>
    </location>
</feature>
<feature type="modified residue" description="Phosphoserine" evidence="20">
    <location>
        <position position="688"/>
    </location>
</feature>
<feature type="modified residue" description="Phosphothreonine" evidence="20">
    <location>
        <position position="1121"/>
    </location>
</feature>
<feature type="modified residue" description="Phosphoserine" evidence="1">
    <location>
        <position position="1130"/>
    </location>
</feature>
<feature type="disulfide bond" description="Interchain" evidence="10 11 18 19">
    <location>
        <position position="110"/>
    </location>
</feature>
<feature type="splice variant" id="VSP_012743" description="In isoform 2." evidence="14">
    <original>IELREREIERLSVALD</original>
    <variation>VGFLFTCIVGIEIGML</variation>
    <location>
        <begin position="234"/>
        <end position="249"/>
    </location>
</feature>
<feature type="splice variant" id="VSP_012744" description="In isoform 2." evidence="14">
    <location>
        <begin position="250"/>
        <end position="1140"/>
    </location>
</feature>
<feature type="sequence variant" id="VAR_057785" description="In dbSNP:rs3214045.">
    <original>I</original>
    <variation>L</variation>
    <location>
        <position position="769"/>
    </location>
</feature>
<feature type="mutagenesis site" description="Reduced microtubule binding ability but normal coiled-coil homodimerization; when associated with A-104 and A-108." evidence="10">
    <original>K</original>
    <variation>A</variation>
    <location>
        <position position="101"/>
    </location>
</feature>
<feature type="mutagenesis site" description="Reduced microtubule binding ability but normal coiled-coil homodimerization; when associated with A-101 and A-108." evidence="10">
    <original>K</original>
    <variation>A</variation>
    <location>
        <position position="104"/>
    </location>
</feature>
<feature type="mutagenesis site" description="Reduced microtubule binding ability but normal coiled-coil homodimerization; when associated with A-101 and A-104." evidence="10">
    <original>K</original>
    <variation>A</variation>
    <location>
        <position position="108"/>
    </location>
</feature>
<feature type="sequence conflict" description="In Ref. 4; BAA31610." evidence="15" ref="4">
    <original>V</original>
    <variation>L</variation>
    <location>
        <position position="336"/>
    </location>
</feature>
<feature type="sequence conflict" description="In Ref. 3; AAH12003." evidence="15" ref="3">
    <original>Q</original>
    <variation>R</variation>
    <location>
        <position position="509"/>
    </location>
</feature>
<feature type="helix" evidence="21">
    <location>
        <begin position="82"/>
        <end position="131"/>
    </location>
</feature>
<dbReference type="EMBL" id="AK023683">
    <property type="status" value="NOT_ANNOTATED_CDS"/>
    <property type="molecule type" value="mRNA"/>
</dbReference>
<dbReference type="EMBL" id="AC118280">
    <property type="status" value="NOT_ANNOTATED_CDS"/>
    <property type="molecule type" value="Genomic_DNA"/>
</dbReference>
<dbReference type="EMBL" id="AC110611">
    <property type="status" value="NOT_ANNOTATED_CDS"/>
    <property type="molecule type" value="Genomic_DNA"/>
</dbReference>
<dbReference type="EMBL" id="AC092627">
    <property type="status" value="NOT_ANNOTATED_CDS"/>
    <property type="molecule type" value="Genomic_DNA"/>
</dbReference>
<dbReference type="EMBL" id="BC012003">
    <property type="protein sequence ID" value="AAH12003.1"/>
    <property type="status" value="ALT_SEQ"/>
    <property type="molecule type" value="mRNA"/>
</dbReference>
<dbReference type="EMBL" id="BC136535">
    <property type="protein sequence ID" value="AAI36536.1"/>
    <property type="molecule type" value="mRNA"/>
</dbReference>
<dbReference type="EMBL" id="BC136536">
    <property type="protein sequence ID" value="AAI36537.1"/>
    <property type="molecule type" value="mRNA"/>
</dbReference>
<dbReference type="EMBL" id="AB014535">
    <property type="protein sequence ID" value="BAA31610.2"/>
    <property type="status" value="ALT_SEQ"/>
    <property type="molecule type" value="mRNA"/>
</dbReference>
<dbReference type="EMBL" id="BK005586">
    <property type="protein sequence ID" value="DAA05590.1"/>
    <property type="molecule type" value="mRNA"/>
</dbReference>
<dbReference type="CCDS" id="CCDS33986.1">
    <molecule id="Q66GS9-1"/>
</dbReference>
<dbReference type="RefSeq" id="NP_079285.2">
    <molecule id="Q66GS9-1"/>
    <property type="nucleotide sequence ID" value="NM_025009.4"/>
</dbReference>
<dbReference type="PDB" id="5FCN">
    <property type="method" value="X-ray"/>
    <property type="resolution" value="1.80 A"/>
    <property type="chains" value="A/B=82-144"/>
</dbReference>
<dbReference type="PDB" id="5NG4">
    <property type="method" value="X-ray"/>
    <property type="resolution" value="2.14 A"/>
    <property type="chains" value="A/B=82-144"/>
</dbReference>
<dbReference type="PDBsum" id="5FCN"/>
<dbReference type="PDBsum" id="5NG4"/>
<dbReference type="SMR" id="Q66GS9"/>
<dbReference type="BioGRID" id="115018">
    <property type="interactions" value="273"/>
</dbReference>
<dbReference type="DIP" id="DIP-50271N"/>
<dbReference type="FunCoup" id="Q66GS9">
    <property type="interactions" value="2293"/>
</dbReference>
<dbReference type="IntAct" id="Q66GS9">
    <property type="interactions" value="413"/>
</dbReference>
<dbReference type="MINT" id="Q66GS9"/>
<dbReference type="STRING" id="9606.ENSP00000257287"/>
<dbReference type="MoonDB" id="Q66GS9">
    <property type="type" value="Predicted"/>
</dbReference>
<dbReference type="GlyGen" id="Q66GS9">
    <property type="glycosylation" value="3 sites, 1 O-linked glycan (3 sites)"/>
</dbReference>
<dbReference type="iPTMnet" id="Q66GS9"/>
<dbReference type="PhosphoSitePlus" id="Q66GS9"/>
<dbReference type="BioMuta" id="CEP135"/>
<dbReference type="DMDM" id="296434460"/>
<dbReference type="jPOST" id="Q66GS9"/>
<dbReference type="MassIVE" id="Q66GS9"/>
<dbReference type="PaxDb" id="9606-ENSP00000257287"/>
<dbReference type="PeptideAtlas" id="Q66GS9"/>
<dbReference type="ProteomicsDB" id="65948">
    <molecule id="Q66GS9-1"/>
</dbReference>
<dbReference type="ProteomicsDB" id="65949">
    <molecule id="Q66GS9-2"/>
</dbReference>
<dbReference type="Pumba" id="Q66GS9"/>
<dbReference type="Antibodypedia" id="23978">
    <property type="antibodies" value="147 antibodies from 23 providers"/>
</dbReference>
<dbReference type="DNASU" id="9662"/>
<dbReference type="Ensembl" id="ENST00000257287.5">
    <molecule id="Q66GS9-1"/>
    <property type="protein sequence ID" value="ENSP00000257287.3"/>
    <property type="gene ID" value="ENSG00000174799.12"/>
</dbReference>
<dbReference type="Ensembl" id="ENST00000422247.6">
    <molecule id="Q66GS9-2"/>
    <property type="protein sequence ID" value="ENSP00000412799.2"/>
    <property type="gene ID" value="ENSG00000174799.12"/>
</dbReference>
<dbReference type="GeneID" id="9662"/>
<dbReference type="KEGG" id="hsa:9662"/>
<dbReference type="MANE-Select" id="ENST00000257287.5">
    <property type="protein sequence ID" value="ENSP00000257287.3"/>
    <property type="RefSeq nucleotide sequence ID" value="NM_025009.5"/>
    <property type="RefSeq protein sequence ID" value="NP_079285.2"/>
</dbReference>
<dbReference type="UCSC" id="uc003hbh.3">
    <molecule id="Q66GS9-1"/>
    <property type="organism name" value="human"/>
</dbReference>
<dbReference type="AGR" id="HGNC:29086"/>
<dbReference type="CTD" id="9662"/>
<dbReference type="DisGeNET" id="9662"/>
<dbReference type="GeneCards" id="CEP135"/>
<dbReference type="HGNC" id="HGNC:29086">
    <property type="gene designation" value="CEP135"/>
</dbReference>
<dbReference type="HPA" id="ENSG00000174799">
    <property type="expression patterns" value="Low tissue specificity"/>
</dbReference>
<dbReference type="MalaCards" id="CEP135"/>
<dbReference type="MIM" id="611423">
    <property type="type" value="gene"/>
</dbReference>
<dbReference type="MIM" id="614673">
    <property type="type" value="phenotype"/>
</dbReference>
<dbReference type="neXtProt" id="NX_Q66GS9"/>
<dbReference type="OpenTargets" id="ENSG00000174799"/>
<dbReference type="Orphanet" id="2512">
    <property type="disease" value="Autosomal recessive primary microcephaly"/>
</dbReference>
<dbReference type="PharmGKB" id="PA128394551"/>
<dbReference type="VEuPathDB" id="HostDB:ENSG00000174799"/>
<dbReference type="eggNOG" id="ENOG502QT27">
    <property type="taxonomic scope" value="Eukaryota"/>
</dbReference>
<dbReference type="GeneTree" id="ENSGT00940000159453"/>
<dbReference type="HOGENOM" id="CLU_1152849_0_0_1"/>
<dbReference type="InParanoid" id="Q66GS9"/>
<dbReference type="OMA" id="QGRENTM"/>
<dbReference type="OrthoDB" id="10254663at2759"/>
<dbReference type="PAN-GO" id="Q66GS9">
    <property type="GO annotations" value="3 GO annotations based on evolutionary models"/>
</dbReference>
<dbReference type="PhylomeDB" id="Q66GS9"/>
<dbReference type="TreeFam" id="TF326518"/>
<dbReference type="PathwayCommons" id="Q66GS9"/>
<dbReference type="Reactome" id="R-HSA-2565942">
    <property type="pathway name" value="Regulation of PLK1 Activity at G2/M Transition"/>
</dbReference>
<dbReference type="Reactome" id="R-HSA-380259">
    <property type="pathway name" value="Loss of Nlp from mitotic centrosomes"/>
</dbReference>
<dbReference type="Reactome" id="R-HSA-380270">
    <property type="pathway name" value="Recruitment of mitotic centrosome proteins and complexes"/>
</dbReference>
<dbReference type="Reactome" id="R-HSA-380284">
    <property type="pathway name" value="Loss of proteins required for interphase microtubule organization from the centrosome"/>
</dbReference>
<dbReference type="Reactome" id="R-HSA-380320">
    <property type="pathway name" value="Recruitment of NuMA to mitotic centrosomes"/>
</dbReference>
<dbReference type="Reactome" id="R-HSA-5620912">
    <property type="pathway name" value="Anchoring of the basal body to the plasma membrane"/>
</dbReference>
<dbReference type="Reactome" id="R-HSA-8854518">
    <property type="pathway name" value="AURKA Activation by TPX2"/>
</dbReference>
<dbReference type="SignaLink" id="Q66GS9"/>
<dbReference type="SIGNOR" id="Q66GS9"/>
<dbReference type="BioGRID-ORCS" id="9662">
    <property type="hits" value="110 hits in 1168 CRISPR screens"/>
</dbReference>
<dbReference type="CD-CODE" id="8C2F96ED">
    <property type="entry name" value="Centrosome"/>
</dbReference>
<dbReference type="ChiTaRS" id="CEP135">
    <property type="organism name" value="human"/>
</dbReference>
<dbReference type="GeneWiki" id="CEP135"/>
<dbReference type="GenomeRNAi" id="9662"/>
<dbReference type="Pharos" id="Q66GS9">
    <property type="development level" value="Tbio"/>
</dbReference>
<dbReference type="PRO" id="PR:Q66GS9"/>
<dbReference type="Proteomes" id="UP000005640">
    <property type="component" value="Chromosome 4"/>
</dbReference>
<dbReference type="RNAct" id="Q66GS9">
    <property type="molecule type" value="protein"/>
</dbReference>
<dbReference type="Bgee" id="ENSG00000174799">
    <property type="expression patterns" value="Expressed in amniotic fluid and 163 other cell types or tissues"/>
</dbReference>
<dbReference type="GO" id="GO:0005814">
    <property type="term" value="C:centriole"/>
    <property type="evidence" value="ECO:0000314"/>
    <property type="project" value="UniProtKB"/>
</dbReference>
<dbReference type="GO" id="GO:0005813">
    <property type="term" value="C:centrosome"/>
    <property type="evidence" value="ECO:0000314"/>
    <property type="project" value="UniProtKB"/>
</dbReference>
<dbReference type="GO" id="GO:0005829">
    <property type="term" value="C:cytosol"/>
    <property type="evidence" value="ECO:0000304"/>
    <property type="project" value="Reactome"/>
</dbReference>
<dbReference type="GO" id="GO:0042802">
    <property type="term" value="F:identical protein binding"/>
    <property type="evidence" value="ECO:0000314"/>
    <property type="project" value="UniProtKB"/>
</dbReference>
<dbReference type="GO" id="GO:0008017">
    <property type="term" value="F:microtubule binding"/>
    <property type="evidence" value="ECO:0000314"/>
    <property type="project" value="UniProtKB"/>
</dbReference>
<dbReference type="GO" id="GO:0042803">
    <property type="term" value="F:protein homodimerization activity"/>
    <property type="evidence" value="ECO:0000314"/>
    <property type="project" value="UniProtKB"/>
</dbReference>
<dbReference type="GO" id="GO:0015631">
    <property type="term" value="F:tubulin binding"/>
    <property type="evidence" value="ECO:0000314"/>
    <property type="project" value="UniProtKB"/>
</dbReference>
<dbReference type="GO" id="GO:0007099">
    <property type="term" value="P:centriole replication"/>
    <property type="evidence" value="ECO:0000315"/>
    <property type="project" value="UniProtKB"/>
</dbReference>
<dbReference type="GO" id="GO:0010457">
    <property type="term" value="P:centriole-centriole cohesion"/>
    <property type="evidence" value="ECO:0000315"/>
    <property type="project" value="UniProtKB"/>
</dbReference>
<dbReference type="GO" id="GO:1904951">
    <property type="term" value="P:positive regulation of establishment of protein localization"/>
    <property type="evidence" value="ECO:0000315"/>
    <property type="project" value="UniProtKB"/>
</dbReference>
<dbReference type="GO" id="GO:1902857">
    <property type="term" value="P:positive regulation of non-motile cilium assembly"/>
    <property type="evidence" value="ECO:0000315"/>
    <property type="project" value="UniProtKB"/>
</dbReference>
<dbReference type="CDD" id="cd22292">
    <property type="entry name" value="cc_Cep135_MBD"/>
    <property type="match status" value="1"/>
</dbReference>
<dbReference type="Gene3D" id="1.10.287.1490">
    <property type="match status" value="2"/>
</dbReference>
<dbReference type="InterPro" id="IPR051877">
    <property type="entry name" value="Centriole_BasalBody_StrucProt"/>
</dbReference>
<dbReference type="PANTHER" id="PTHR20544:SF1">
    <property type="entry name" value="CENTROSOMAL PROTEIN 135KDA"/>
    <property type="match status" value="1"/>
</dbReference>
<dbReference type="PANTHER" id="PTHR20544">
    <property type="entry name" value="CENTROSOMAL PROTEIN CEP135"/>
    <property type="match status" value="1"/>
</dbReference>
<proteinExistence type="evidence at protein level"/>
<comment type="function">
    <text evidence="5 6 8 9 10">Centrosomal microtubule-binding protein involved in centriole biogenesis (PubMed:27477386). Acts as a scaffolding protein during early centriole biogenesis. Required for the targeting of centriole satellite proteins to centrosomes such as of PCM1, SSX2IP and CEP290 and recruitment of WRAP73 to centrioles. Also required for centriole-centriole cohesion during interphase by acting as a platform protein for CEP250 at the centriole. Required for the recruitment of CEP295 to the proximal end of new-born centrioles at the centriolar microtubule wall during early S phase in a PLK4-dependent manner (PubMed:27185865).</text>
</comment>
<comment type="subunit">
    <text evidence="1 6 10">Homodimer (PubMed:27477386). Interacts with DCTN2 (By similarity). Interacts with CEP250 (PubMed:18851962).</text>
</comment>
<comment type="interaction">
    <interactant intactId="EBI-1046993">
        <id>Q66GS9</id>
    </interactant>
    <interactant intactId="EBI-527363">
        <id>Q9UL18</id>
        <label>AGO1</label>
    </interactant>
    <organismsDiffer>false</organismsDiffer>
    <experiments>2</experiments>
</comment>
<comment type="interaction">
    <interactant intactId="EBI-1046993">
        <id>Q66GS9</id>
    </interactant>
    <interactant intactId="EBI-946194">
        <id>Q9HC77</id>
        <label>CENPJ</label>
    </interactant>
    <organismsDiffer>false</organismsDiffer>
    <experiments>8</experiments>
</comment>
<comment type="interaction">
    <interactant intactId="EBI-1046993">
        <id>Q66GS9</id>
    </interactant>
    <interactant intactId="EBI-15878364">
        <id>O94986-3</id>
        <label>CEP152</label>
    </interactant>
    <organismsDiffer>false</organismsDiffer>
    <experiments>2</experiments>
</comment>
<comment type="interaction">
    <interactant intactId="EBI-1046993">
        <id>Q66GS9</id>
    </interactant>
    <interactant intactId="EBI-1059012">
        <id>Q5TB80</id>
        <label>CEP162</label>
    </interactant>
    <organismsDiffer>false</organismsDiffer>
    <experiments>3</experiments>
</comment>
<comment type="interaction">
    <interactant intactId="EBI-1046993">
        <id>Q66GS9</id>
    </interactant>
    <interactant intactId="EBI-928842">
        <id>Q9GZM8</id>
        <label>NDEL1</label>
    </interactant>
    <organismsDiffer>false</organismsDiffer>
    <experiments>4</experiments>
</comment>
<comment type="interaction">
    <interactant intactId="EBI-1046993">
        <id>Q66GS9</id>
    </interactant>
    <interactant intactId="EBI-1210753">
        <id>Q7Z417</id>
        <label>NUFIP2</label>
    </interactant>
    <organismsDiffer>false</organismsDiffer>
    <experiments>3</experiments>
</comment>
<comment type="interaction">
    <interactant intactId="EBI-1046993">
        <id>Q66GS9</id>
    </interactant>
    <interactant intactId="EBI-11749468">
        <id>A0A087WUI6</id>
        <label>PIBF1</label>
    </interactant>
    <organismsDiffer>false</organismsDiffer>
    <experiments>3</experiments>
</comment>
<comment type="interaction">
    <interactant intactId="EBI-1046993">
        <id>Q66GS9</id>
    </interactant>
    <interactant intactId="EBI-7958436">
        <id>Q5TC82</id>
        <label>RC3H1</label>
    </interactant>
    <organismsDiffer>false</organismsDiffer>
    <experiments>4</experiments>
</comment>
<comment type="interaction">
    <interactant intactId="EBI-1046993">
        <id>Q66GS9</id>
    </interactant>
    <interactant intactId="EBI-1570153">
        <id>Q6UVJ0</id>
        <label>SASS6</label>
    </interactant>
    <organismsDiffer>false</organismsDiffer>
    <experiments>8</experiments>
</comment>
<comment type="interaction">
    <interactant intactId="EBI-1046993">
        <id>Q66GS9</id>
    </interactant>
    <interactant intactId="EBI-2361917">
        <id>Q8N0Z3</id>
        <label>SPICE1</label>
    </interactant>
    <organismsDiffer>false</organismsDiffer>
    <experiments>4</experiments>
</comment>
<comment type="subcellular location">
    <subcellularLocation>
        <location evidence="4 5 12 13">Cytoplasm</location>
        <location evidence="4 5 12 13">Cytoskeleton</location>
        <location evidence="4 5 12 13">Microtubule organizing center</location>
        <location evidence="4 5 12 13">Centrosome</location>
        <location evidence="4 5 12 13">Centriole</location>
    </subcellularLocation>
    <text>During centriole biogenesis, it is concentrated within the proximal lumen of both parental centrioles and procentrioles.</text>
</comment>
<comment type="alternative products">
    <event type="alternative splicing"/>
    <isoform>
        <id>Q66GS9-1</id>
        <name>1</name>
        <sequence type="displayed"/>
    </isoform>
    <isoform>
        <id>Q66GS9-2</id>
        <name>2</name>
        <sequence type="described" ref="VSP_012743 VSP_012744"/>
    </isoform>
</comment>
<comment type="domain">
    <text evidence="10">Coiled-coil domains are critical for microtubule binding via the formation of a two-stranded coiled-coil structure in homodimers.</text>
</comment>
<comment type="disease" evidence="7">
    <disease id="DI-03470">
        <name>Microcephaly 8, primary, autosomal recessive</name>
        <acronym>MCPH8</acronym>
        <description>A disease defined as a head circumference more than 3 standard deviations below the age-related mean. Brain weight is markedly reduced and the cerebral cortex is disproportionately small. Despite this marked reduction in size, the gyral pattern is relatively well preserved, with no major abnormality in cortical architecture. Affected individuals have severe intellectual disability. Primary microcephaly is further defined by the absence of other syndromic features or significant neurological deficits due to degenerative brain disorder.</description>
        <dbReference type="MIM" id="614673"/>
    </disease>
    <text>The disease is caused by variants affecting the gene represented in this entry.</text>
</comment>
<comment type="similarity">
    <text evidence="15">Belongs to the CEP135/TSGA10 family.</text>
</comment>
<comment type="sequence caution" evidence="15">
    <conflict type="miscellaneous discrepancy">
        <sequence resource="EMBL-CDS" id="AAH12003"/>
    </conflict>
    <text>Contaminating sequence. Potential poly-A sequence.</text>
</comment>
<comment type="sequence caution" evidence="15">
    <conflict type="miscellaneous discrepancy">
        <sequence resource="EMBL-CDS" id="BAA31610"/>
    </conflict>
    <text>Intron retention.</text>
</comment>
<evidence type="ECO:0000250" key="1">
    <source>
        <dbReference type="UniProtKB" id="Q6P5D4"/>
    </source>
</evidence>
<evidence type="ECO:0000255" key="2"/>
<evidence type="ECO:0000256" key="3">
    <source>
        <dbReference type="SAM" id="MobiDB-lite"/>
    </source>
</evidence>
<evidence type="ECO:0000269" key="4">
    <source>
    </source>
</evidence>
<evidence type="ECO:0000269" key="5">
    <source>
    </source>
</evidence>
<evidence type="ECO:0000269" key="6">
    <source>
    </source>
</evidence>
<evidence type="ECO:0000269" key="7">
    <source>
    </source>
</evidence>
<evidence type="ECO:0000269" key="8">
    <source>
    </source>
</evidence>
<evidence type="ECO:0000269" key="9">
    <source>
    </source>
</evidence>
<evidence type="ECO:0000269" key="10">
    <source>
    </source>
</evidence>
<evidence type="ECO:0000269" key="11">
    <source>
    </source>
</evidence>
<evidence type="ECO:0000269" key="12">
    <source>
    </source>
</evidence>
<evidence type="ECO:0000269" key="13">
    <source>
    </source>
</evidence>
<evidence type="ECO:0000303" key="14">
    <source>
    </source>
</evidence>
<evidence type="ECO:0000305" key="15"/>
<evidence type="ECO:0000305" key="16">
    <source>
    </source>
</evidence>
<evidence type="ECO:0000312" key="17">
    <source>
        <dbReference type="HGNC" id="HGNC:29086"/>
    </source>
</evidence>
<evidence type="ECO:0007744" key="18">
    <source>
        <dbReference type="PDB" id="5FCN"/>
    </source>
</evidence>
<evidence type="ECO:0007744" key="19">
    <source>
        <dbReference type="PDB" id="5NG4"/>
    </source>
</evidence>
<evidence type="ECO:0007744" key="20">
    <source>
    </source>
</evidence>
<evidence type="ECO:0007829" key="21">
    <source>
        <dbReference type="PDB" id="5FCN"/>
    </source>
</evidence>
<keyword id="KW-0002">3D-structure</keyword>
<keyword id="KW-0025">Alternative splicing</keyword>
<keyword id="KW-0175">Coiled coil</keyword>
<keyword id="KW-0963">Cytoplasm</keyword>
<keyword id="KW-0206">Cytoskeleton</keyword>
<keyword id="KW-0225">Disease variant</keyword>
<keyword id="KW-1015">Disulfide bond</keyword>
<keyword id="KW-0991">Intellectual disability</keyword>
<keyword id="KW-0597">Phosphoprotein</keyword>
<keyword id="KW-0905">Primary microcephaly</keyword>
<keyword id="KW-1267">Proteomics identification</keyword>
<keyword id="KW-1185">Reference proteome</keyword>
<organism>
    <name type="scientific">Homo sapiens</name>
    <name type="common">Human</name>
    <dbReference type="NCBI Taxonomy" id="9606"/>
    <lineage>
        <taxon>Eukaryota</taxon>
        <taxon>Metazoa</taxon>
        <taxon>Chordata</taxon>
        <taxon>Craniata</taxon>
        <taxon>Vertebrata</taxon>
        <taxon>Euteleostomi</taxon>
        <taxon>Mammalia</taxon>
        <taxon>Eutheria</taxon>
        <taxon>Euarchontoglires</taxon>
        <taxon>Primates</taxon>
        <taxon>Haplorrhini</taxon>
        <taxon>Catarrhini</taxon>
        <taxon>Hominidae</taxon>
        <taxon>Homo</taxon>
    </lineage>
</organism>
<protein>
    <recommendedName>
        <fullName evidence="15">Centrosomal protein of 135 kDa</fullName>
        <shortName>Cep135</shortName>
    </recommendedName>
    <alternativeName>
        <fullName>Centrosomal protein 4</fullName>
    </alternativeName>
</protein>
<sequence length="1140" mass="133490">MTTAVERKYINIRKRLDQLGYRQTLTVECLPLVEKLFSDLVHTTESLRQSKLSAVKAEKESANFDFVLEPYKLENARLSRENNELYLELMKLREHSDQHVKELKTSLKKCARETADLKFLNNQYAHKLKLLEKESKAKNERIQQLQEKNLHAVVQTPGGKKRSIAFRRQRMQIDEPVPPSEVSSYPVPQPDDPYIADLLQVADNRIQELQQEVHQLQEKLAMMESGVRDYSKQIELREREIERLSVALDGGRSPDVLSLESRNKTNEKLIAHLNIQVDFLQQANKDLEKRIRELMETKETVTSEVVNLSNKNEKLCQELTEIDQLAQQLERHKEEVLETADKELGEAKKEIKRKLSEMQDLEETMAKLQLELNLCQKEKERLSDELLVKSDLETVVHQLEQEKQRLSKKVESFAVTERQLTLEVERMRLEHGIKRRDRSPSRLDTFLKGIEEERDYYKKELERLQHIIQRRSCSTSYSAREKSSIFRTPEKGDYNSEIHQITRERDELQRMLERFEKYMEDIQSNVKLLTAERDKLSVLYNEAQEELSALRKESTQTTAPHNIVSLMEKEKELALSDLRRIMAEKEALREKLEHIEEVSLFGKSELEKTIEHLTCVNHQLESEKYELKSKVLIMKETIESLENKLKVQAQKFSHVAGDSSHQKTEVNSLRIVNEQLQRSVDDYQHRLSIKRGELESAQAQIKILEEKIDELNLKMTSQDEEAHVMKKTIGVIDKEKDFLQETVDEKTEKIANLQENLANKEKAVAQMKIMISECESSVNQLKETLVNRDREINSLRRQLDAAHKELDEVGRSREIAFKENRRLQDDLATMARENQEISLELEAAVQEKEEMKSRVHKYITEVSRWESLMAAKEKENQDLLDRFQMLHNRAEDWEVKAHQAEGESSSVRLELLSIDTERRHLRERVELLEKEIQEHINAHHAYESQISSMAKAMSRLEEELRHQEDEKATVLNDLSSLRELCIKLDSGKDIMTQQLNSKNLEFERVVVELENVKSESDLLKKQLSNERHTVKNLESLLATNRDKEFHSHLTSHEKDTEIQLLKEKLTLSESKLTSQSRENTMLRAKVAQLQTDYDALKRQISTERYERERAIQEMRRHGLATPPLSSTLRSPSHSPEHRNV</sequence>